<keyword id="KW-0687">Ribonucleoprotein</keyword>
<keyword id="KW-0689">Ribosomal protein</keyword>
<keyword id="KW-0694">RNA-binding</keyword>
<keyword id="KW-0699">rRNA-binding</keyword>
<evidence type="ECO:0000255" key="1">
    <source>
        <dbReference type="HAMAP-Rule" id="MF_01302"/>
    </source>
</evidence>
<evidence type="ECO:0000305" key="2"/>
<protein>
    <recommendedName>
        <fullName evidence="1">Small ribosomal subunit protein uS8</fullName>
    </recommendedName>
    <alternativeName>
        <fullName evidence="2">30S ribosomal protein S8</fullName>
    </alternativeName>
</protein>
<reference key="1">
    <citation type="journal article" date="2007" name="Proc. Natl. Acad. Sci. U.S.A.">
        <title>Genome plasticity of BCG and impact on vaccine efficacy.</title>
        <authorList>
            <person name="Brosch R."/>
            <person name="Gordon S.V."/>
            <person name="Garnier T."/>
            <person name="Eiglmeier K."/>
            <person name="Frigui W."/>
            <person name="Valenti P."/>
            <person name="Dos Santos S."/>
            <person name="Duthoy S."/>
            <person name="Lacroix C."/>
            <person name="Garcia-Pelayo C."/>
            <person name="Inwald J.K."/>
            <person name="Golby P."/>
            <person name="Garcia J.N."/>
            <person name="Hewinson R.G."/>
            <person name="Behr M.A."/>
            <person name="Quail M.A."/>
            <person name="Churcher C."/>
            <person name="Barrell B.G."/>
            <person name="Parkhill J."/>
            <person name="Cole S.T."/>
        </authorList>
    </citation>
    <scope>NUCLEOTIDE SEQUENCE [LARGE SCALE GENOMIC DNA]</scope>
    <source>
        <strain>BCG / Pasteur 1173P2</strain>
    </source>
</reference>
<dbReference type="EMBL" id="AM408590">
    <property type="protein sequence ID" value="CAL70754.1"/>
    <property type="molecule type" value="Genomic_DNA"/>
</dbReference>
<dbReference type="RefSeq" id="WP_003403669.1">
    <property type="nucleotide sequence ID" value="NC_008769.1"/>
</dbReference>
<dbReference type="SMR" id="A1KGJ9"/>
<dbReference type="GeneID" id="45424683"/>
<dbReference type="KEGG" id="mbb:BCG_0768"/>
<dbReference type="HOGENOM" id="CLU_098428_0_1_11"/>
<dbReference type="Proteomes" id="UP000001472">
    <property type="component" value="Chromosome"/>
</dbReference>
<dbReference type="GO" id="GO:1990904">
    <property type="term" value="C:ribonucleoprotein complex"/>
    <property type="evidence" value="ECO:0007669"/>
    <property type="project" value="UniProtKB-KW"/>
</dbReference>
<dbReference type="GO" id="GO:0005840">
    <property type="term" value="C:ribosome"/>
    <property type="evidence" value="ECO:0007669"/>
    <property type="project" value="UniProtKB-KW"/>
</dbReference>
<dbReference type="GO" id="GO:0019843">
    <property type="term" value="F:rRNA binding"/>
    <property type="evidence" value="ECO:0007669"/>
    <property type="project" value="UniProtKB-UniRule"/>
</dbReference>
<dbReference type="GO" id="GO:0003735">
    <property type="term" value="F:structural constituent of ribosome"/>
    <property type="evidence" value="ECO:0007669"/>
    <property type="project" value="InterPro"/>
</dbReference>
<dbReference type="GO" id="GO:0006412">
    <property type="term" value="P:translation"/>
    <property type="evidence" value="ECO:0007669"/>
    <property type="project" value="UniProtKB-UniRule"/>
</dbReference>
<dbReference type="FunFam" id="3.30.1370.30:FF:000002">
    <property type="entry name" value="30S ribosomal protein S8"/>
    <property type="match status" value="1"/>
</dbReference>
<dbReference type="FunFam" id="3.30.1490.10:FF:000001">
    <property type="entry name" value="30S ribosomal protein S8"/>
    <property type="match status" value="1"/>
</dbReference>
<dbReference type="Gene3D" id="3.30.1370.30">
    <property type="match status" value="1"/>
</dbReference>
<dbReference type="Gene3D" id="3.30.1490.10">
    <property type="match status" value="1"/>
</dbReference>
<dbReference type="HAMAP" id="MF_01302_B">
    <property type="entry name" value="Ribosomal_uS8_B"/>
    <property type="match status" value="1"/>
</dbReference>
<dbReference type="InterPro" id="IPR000630">
    <property type="entry name" value="Ribosomal_uS8"/>
</dbReference>
<dbReference type="InterPro" id="IPR047863">
    <property type="entry name" value="Ribosomal_uS8_CS"/>
</dbReference>
<dbReference type="InterPro" id="IPR035987">
    <property type="entry name" value="Ribosomal_uS8_sf"/>
</dbReference>
<dbReference type="NCBIfam" id="NF001109">
    <property type="entry name" value="PRK00136.1"/>
    <property type="match status" value="1"/>
</dbReference>
<dbReference type="PANTHER" id="PTHR11758">
    <property type="entry name" value="40S RIBOSOMAL PROTEIN S15A"/>
    <property type="match status" value="1"/>
</dbReference>
<dbReference type="Pfam" id="PF00410">
    <property type="entry name" value="Ribosomal_S8"/>
    <property type="match status" value="1"/>
</dbReference>
<dbReference type="SUPFAM" id="SSF56047">
    <property type="entry name" value="Ribosomal protein S8"/>
    <property type="match status" value="1"/>
</dbReference>
<dbReference type="PROSITE" id="PS00053">
    <property type="entry name" value="RIBOSOMAL_S8"/>
    <property type="match status" value="1"/>
</dbReference>
<name>RS8_MYCBP</name>
<sequence length="132" mass="14412">MTMTDPIADFLTRLRNANSAYHDEVSLPHSKLKANIAQILKNEGYISDFRTEDARVGKSLVIQLKYGPSRERSIAGLRRVSKPGLRVYAKSTNLPRVLGGLGVAIISTSSGLLTDRQAARQGVGGEVLAYVW</sequence>
<proteinExistence type="inferred from homology"/>
<comment type="function">
    <text evidence="1">One of the primary rRNA binding proteins, it binds directly to 16S rRNA central domain where it helps coordinate assembly of the platform of the 30S subunit.</text>
</comment>
<comment type="subunit">
    <text evidence="1">Part of the 30S ribosomal subunit. Contacts proteins S5 and S12.</text>
</comment>
<comment type="similarity">
    <text evidence="1">Belongs to the universal ribosomal protein uS8 family.</text>
</comment>
<gene>
    <name evidence="1" type="primary">rpsH</name>
    <name type="ordered locus">BCG_0768</name>
</gene>
<feature type="chain" id="PRO_0000290879" description="Small ribosomal subunit protein uS8">
    <location>
        <begin position="1"/>
        <end position="132"/>
    </location>
</feature>
<accession>A1KGJ9</accession>
<organism>
    <name type="scientific">Mycobacterium bovis (strain BCG / Pasteur 1173P2)</name>
    <dbReference type="NCBI Taxonomy" id="410289"/>
    <lineage>
        <taxon>Bacteria</taxon>
        <taxon>Bacillati</taxon>
        <taxon>Actinomycetota</taxon>
        <taxon>Actinomycetes</taxon>
        <taxon>Mycobacteriales</taxon>
        <taxon>Mycobacteriaceae</taxon>
        <taxon>Mycobacterium</taxon>
        <taxon>Mycobacterium tuberculosis complex</taxon>
    </lineage>
</organism>